<organism>
    <name type="scientific">Vesicular stomatitis Indiana virus (strain 85CLB South America)</name>
    <name type="common">VSIV</name>
    <dbReference type="NCBI Taxonomy" id="434490"/>
    <lineage>
        <taxon>Viruses</taxon>
        <taxon>Riboviria</taxon>
        <taxon>Orthornavirae</taxon>
        <taxon>Negarnaviricota</taxon>
        <taxon>Haploviricotina</taxon>
        <taxon>Monjiviricetes</taxon>
        <taxon>Mononegavirales</taxon>
        <taxon>Rhabdoviridae</taxon>
        <taxon>Alpharhabdovirinae</taxon>
        <taxon>Vesiculovirus</taxon>
        <taxon>Vesiculovirus indiana</taxon>
    </lineage>
</organism>
<keyword id="KW-0024">Alternative initiation</keyword>
<gene>
    <name type="primary">P</name>
</gene>
<accession>P0C2X4</accession>
<proteinExistence type="inferred from homology"/>
<protein>
    <recommendedName>
        <fullName>Protein C'</fullName>
    </recommendedName>
</protein>
<evidence type="ECO:0000250" key="1">
    <source>
        <dbReference type="UniProtKB" id="P0C2X2"/>
    </source>
</evidence>
<evidence type="ECO:0000305" key="2"/>
<reference key="1">
    <citation type="journal article" date="2002" name="J. Gen. Virol.">
        <title>Full-length genome analysis of natural isolates of vesicular stomatitis virus (Indiana 1 serotype) from North, Central and South America.</title>
        <authorList>
            <person name="Rodriguez L.L."/>
            <person name="Pauszek S.J."/>
            <person name="Bunch T.A."/>
            <person name="Schumann K.R."/>
        </authorList>
    </citation>
    <scope>NUCLEOTIDE SEQUENCE [GENOMIC RNA]</scope>
</reference>
<organismHost>
    <name type="scientific">Aedes</name>
    <dbReference type="NCBI Taxonomy" id="7158"/>
</organismHost>
<organismHost>
    <name type="scientific">Bos taurus</name>
    <name type="common">Bovine</name>
    <dbReference type="NCBI Taxonomy" id="9913"/>
</organismHost>
<organismHost>
    <name type="scientific">Culicoides</name>
    <dbReference type="NCBI Taxonomy" id="58271"/>
</organismHost>
<organismHost>
    <name type="scientific">Equus asinus</name>
    <name type="common">Donkey</name>
    <name type="synonym">Equus africanus asinus</name>
    <dbReference type="NCBI Taxonomy" id="9793"/>
</organismHost>
<organismHost>
    <name type="scientific">Equus caballus</name>
    <name type="common">Horse</name>
    <dbReference type="NCBI Taxonomy" id="9796"/>
</organismHost>
<organismHost>
    <name type="scientific">Homo sapiens</name>
    <name type="common">Human</name>
    <dbReference type="NCBI Taxonomy" id="9606"/>
</organismHost>
<organismHost>
    <name type="scientific">Lutzomyia</name>
    <dbReference type="NCBI Taxonomy" id="252607"/>
</organismHost>
<organismHost>
    <name type="scientific">Musca domestica</name>
    <name type="common">House fly</name>
    <dbReference type="NCBI Taxonomy" id="7370"/>
</organismHost>
<organismHost>
    <name type="scientific">Simuliidae</name>
    <name type="common">black flies</name>
    <dbReference type="NCBI Taxonomy" id="7190"/>
</organismHost>
<organismHost>
    <name type="scientific">Sus scrofa</name>
    <name type="common">Pig</name>
    <dbReference type="NCBI Taxonomy" id="9823"/>
</organismHost>
<sequence length="67" mass="8016">MRLKHNEMRSPIMSCSKRMEWKSMPSPLIFKQQMILTQSLNQKLKTIKACMYQIRKLSKLKALYRGL</sequence>
<dbReference type="EMBL" id="AF473865">
    <property type="status" value="NOT_ANNOTATED_CDS"/>
    <property type="molecule type" value="Genomic_RNA"/>
</dbReference>
<dbReference type="Proteomes" id="UP000007625">
    <property type="component" value="Genome"/>
</dbReference>
<feature type="chain" id="PRO_0000288651" description="Protein C'">
    <location>
        <begin position="1"/>
        <end position="67"/>
    </location>
</feature>
<feature type="splice variant" id="VSP_025744" description="In isoform C." evidence="2">
    <location>
        <begin position="1"/>
        <end position="12"/>
    </location>
</feature>
<comment type="function">
    <text evidence="1">Seems to stimulates transcription by the viral polymerase. May play a role in viral pathogenesis or transmission by insects vectors.</text>
</comment>
<comment type="alternative products">
    <event type="alternative initiation"/>
    <isoform>
        <id>P0C2X4-1</id>
        <name>C'</name>
        <sequence type="displayed"/>
    </isoform>
    <isoform>
        <id>P0C2X4-2</id>
        <name>C</name>
        <sequence type="described" ref="VSP_025744"/>
    </isoform>
</comment>
<comment type="miscellaneous">
    <text>The P gene has two overlapping open reading frames. One encodes the P protein and the other the C'/C proteins.</text>
</comment>
<comment type="similarity">
    <text evidence="2">Belongs to the rhabdoviruses C protein family.</text>
</comment>
<name>C_VSIVS</name>